<comment type="function">
    <text evidence="1">Functions by promoting the formation of the first peptide bond.</text>
</comment>
<comment type="subcellular location">
    <subcellularLocation>
        <location evidence="1">Cytoplasm</location>
    </subcellularLocation>
</comment>
<comment type="similarity">
    <text evidence="1">Belongs to the eIF-5A family.</text>
</comment>
<accession>A1RX88</accession>
<dbReference type="EMBL" id="CP000505">
    <property type="protein sequence ID" value="ABL77818.1"/>
    <property type="molecule type" value="Genomic_DNA"/>
</dbReference>
<dbReference type="RefSeq" id="WP_011752083.1">
    <property type="nucleotide sequence ID" value="NC_008698.1"/>
</dbReference>
<dbReference type="SMR" id="A1RX88"/>
<dbReference type="STRING" id="368408.Tpen_0409"/>
<dbReference type="EnsemblBacteria" id="ABL77818">
    <property type="protein sequence ID" value="ABL77818"/>
    <property type="gene ID" value="Tpen_0409"/>
</dbReference>
<dbReference type="GeneID" id="4601503"/>
<dbReference type="KEGG" id="tpe:Tpen_0409"/>
<dbReference type="eggNOG" id="arCOG04277">
    <property type="taxonomic scope" value="Archaea"/>
</dbReference>
<dbReference type="HOGENOM" id="CLU_102600_3_0_2"/>
<dbReference type="OrthoDB" id="23689at2157"/>
<dbReference type="Proteomes" id="UP000000641">
    <property type="component" value="Chromosome"/>
</dbReference>
<dbReference type="GO" id="GO:0005737">
    <property type="term" value="C:cytoplasm"/>
    <property type="evidence" value="ECO:0007669"/>
    <property type="project" value="UniProtKB-SubCell"/>
</dbReference>
<dbReference type="GO" id="GO:0043022">
    <property type="term" value="F:ribosome binding"/>
    <property type="evidence" value="ECO:0007669"/>
    <property type="project" value="InterPro"/>
</dbReference>
<dbReference type="GO" id="GO:0003723">
    <property type="term" value="F:RNA binding"/>
    <property type="evidence" value="ECO:0007669"/>
    <property type="project" value="InterPro"/>
</dbReference>
<dbReference type="GO" id="GO:0003746">
    <property type="term" value="F:translation elongation factor activity"/>
    <property type="evidence" value="ECO:0007669"/>
    <property type="project" value="InterPro"/>
</dbReference>
<dbReference type="GO" id="GO:0003743">
    <property type="term" value="F:translation initiation factor activity"/>
    <property type="evidence" value="ECO:0007669"/>
    <property type="project" value="UniProtKB-UniRule"/>
</dbReference>
<dbReference type="GO" id="GO:0045901">
    <property type="term" value="P:positive regulation of translational elongation"/>
    <property type="evidence" value="ECO:0007669"/>
    <property type="project" value="InterPro"/>
</dbReference>
<dbReference type="GO" id="GO:0045905">
    <property type="term" value="P:positive regulation of translational termination"/>
    <property type="evidence" value="ECO:0007669"/>
    <property type="project" value="InterPro"/>
</dbReference>
<dbReference type="Gene3D" id="2.30.30.30">
    <property type="match status" value="1"/>
</dbReference>
<dbReference type="Gene3D" id="2.40.50.140">
    <property type="entry name" value="Nucleic acid-binding proteins"/>
    <property type="match status" value="1"/>
</dbReference>
<dbReference type="HAMAP" id="MF_00085">
    <property type="entry name" value="eIF_5A"/>
    <property type="match status" value="1"/>
</dbReference>
<dbReference type="InterPro" id="IPR001884">
    <property type="entry name" value="IF5A-like"/>
</dbReference>
<dbReference type="InterPro" id="IPR048670">
    <property type="entry name" value="IF5A-like_N"/>
</dbReference>
<dbReference type="InterPro" id="IPR012340">
    <property type="entry name" value="NA-bd_OB-fold"/>
</dbReference>
<dbReference type="InterPro" id="IPR014722">
    <property type="entry name" value="Rib_uL2_dom2"/>
</dbReference>
<dbReference type="InterPro" id="IPR019769">
    <property type="entry name" value="Trans_elong_IF5A_hypusine_site"/>
</dbReference>
<dbReference type="InterPro" id="IPR022847">
    <property type="entry name" value="Transl_elong_IF5A_arc"/>
</dbReference>
<dbReference type="InterPro" id="IPR020189">
    <property type="entry name" value="Transl_elong_IF5A_C"/>
</dbReference>
<dbReference type="InterPro" id="IPR008991">
    <property type="entry name" value="Translation_prot_SH3-like_sf"/>
</dbReference>
<dbReference type="NCBIfam" id="TIGR00037">
    <property type="entry name" value="eIF_5A"/>
    <property type="match status" value="1"/>
</dbReference>
<dbReference type="NCBIfam" id="NF003076">
    <property type="entry name" value="PRK03999.1"/>
    <property type="match status" value="1"/>
</dbReference>
<dbReference type="PANTHER" id="PTHR11673">
    <property type="entry name" value="TRANSLATION INITIATION FACTOR 5A FAMILY MEMBER"/>
    <property type="match status" value="1"/>
</dbReference>
<dbReference type="Pfam" id="PF01287">
    <property type="entry name" value="eIF-5a"/>
    <property type="match status" value="1"/>
</dbReference>
<dbReference type="Pfam" id="PF21485">
    <property type="entry name" value="IF5A-like_N"/>
    <property type="match status" value="1"/>
</dbReference>
<dbReference type="PIRSF" id="PIRSF003025">
    <property type="entry name" value="eIF5A"/>
    <property type="match status" value="1"/>
</dbReference>
<dbReference type="SMART" id="SM01376">
    <property type="entry name" value="eIF-5a"/>
    <property type="match status" value="1"/>
</dbReference>
<dbReference type="SUPFAM" id="SSF50249">
    <property type="entry name" value="Nucleic acid-binding proteins"/>
    <property type="match status" value="1"/>
</dbReference>
<dbReference type="SUPFAM" id="SSF50104">
    <property type="entry name" value="Translation proteins SH3-like domain"/>
    <property type="match status" value="1"/>
</dbReference>
<dbReference type="PROSITE" id="PS00302">
    <property type="entry name" value="IF5A_HYPUSINE"/>
    <property type="match status" value="1"/>
</dbReference>
<proteinExistence type="inferred from homology"/>
<evidence type="ECO:0000255" key="1">
    <source>
        <dbReference type="HAMAP-Rule" id="MF_00085"/>
    </source>
</evidence>
<feature type="chain" id="PRO_1000093012" description="Translation initiation factor 5A">
    <location>
        <begin position="1"/>
        <end position="132"/>
    </location>
</feature>
<feature type="modified residue" description="Hypusine" evidence="1">
    <location>
        <position position="36"/>
    </location>
</feature>
<name>IF5A_THEPD</name>
<gene>
    <name type="primary">eIF5A</name>
    <name type="ordered locus">Tpen_0409</name>
</gene>
<organism>
    <name type="scientific">Thermofilum pendens (strain DSM 2475 / Hrk 5)</name>
    <dbReference type="NCBI Taxonomy" id="368408"/>
    <lineage>
        <taxon>Archaea</taxon>
        <taxon>Thermoproteota</taxon>
        <taxon>Thermoprotei</taxon>
        <taxon>Thermofilales</taxon>
        <taxon>Thermofilaceae</taxon>
        <taxon>Thermofilum</taxon>
    </lineage>
</organism>
<protein>
    <recommendedName>
        <fullName evidence="1">Translation initiation factor 5A</fullName>
    </recommendedName>
    <alternativeName>
        <fullName evidence="1">Hypusine-containing protein</fullName>
    </alternativeName>
    <alternativeName>
        <fullName evidence="1">eIF-5A</fullName>
    </alternativeName>
</protein>
<reference key="1">
    <citation type="journal article" date="2008" name="J. Bacteriol.">
        <title>Genome sequence of Thermofilum pendens reveals an exceptional loss of biosynthetic pathways without genome reduction.</title>
        <authorList>
            <person name="Anderson I."/>
            <person name="Rodriguez J."/>
            <person name="Susanti D."/>
            <person name="Porat I."/>
            <person name="Reich C."/>
            <person name="Ulrich L.E."/>
            <person name="Elkins J.G."/>
            <person name="Mavromatis K."/>
            <person name="Lykidis A."/>
            <person name="Kim E."/>
            <person name="Thompson L.S."/>
            <person name="Nolan M."/>
            <person name="Land M."/>
            <person name="Copeland A."/>
            <person name="Lapidus A."/>
            <person name="Lucas S."/>
            <person name="Detter C."/>
            <person name="Zhulin I.B."/>
            <person name="Olsen G.J."/>
            <person name="Whitman W."/>
            <person name="Mukhopadhyay B."/>
            <person name="Bristow J."/>
            <person name="Kyrpides N."/>
        </authorList>
    </citation>
    <scope>NUCLEOTIDE SEQUENCE [LARGE SCALE GENOMIC DNA]</scope>
    <source>
        <strain>DSM 2475 / Hrk 5</strain>
    </source>
</reference>
<keyword id="KW-0963">Cytoplasm</keyword>
<keyword id="KW-0385">Hypusine</keyword>
<keyword id="KW-0396">Initiation factor</keyword>
<keyword id="KW-0648">Protein biosynthesis</keyword>
<keyword id="KW-1185">Reference proteome</keyword>
<sequence length="132" mass="14589">MSTRPEEAGNIKVGSFIVIDGEPCKVVEVEKSKTGKHGSAKARIVGIGFFDGGKRSIVVPTDARVEVPIIKKFTAQVVAFVGDNVQLMNLEDYSTFEIPMPQEEEIKSKLSEGVEVEVWEVMGRHKIMRVRA</sequence>